<reference key="1">
    <citation type="journal article" date="2003" name="Nature">
        <title>The genome of a motile marine Synechococcus.</title>
        <authorList>
            <person name="Palenik B."/>
            <person name="Brahamsha B."/>
            <person name="Larimer F.W."/>
            <person name="Land M.L."/>
            <person name="Hauser L."/>
            <person name="Chain P."/>
            <person name="Lamerdin J.E."/>
            <person name="Regala W."/>
            <person name="Allen E.E."/>
            <person name="McCarren J."/>
            <person name="Paulsen I.T."/>
            <person name="Dufresne A."/>
            <person name="Partensky F."/>
            <person name="Webb E.A."/>
            <person name="Waterbury J."/>
        </authorList>
    </citation>
    <scope>NUCLEOTIDE SEQUENCE [LARGE SCALE GENOMIC DNA]</scope>
    <source>
        <strain>WH8102</strain>
    </source>
</reference>
<sequence>MPYRISRQAYAETYGPTTGDRVRLADTDLILEVEKDYTVYGDEVKFGGGKVIRDGMGQSQTPRTEGAVDTVITNALILDWWGIVKADVGLKDGRIVGIGKAGNPDTQQGVTIVVGPGTEAIAGEGHILTAGGIDTHIHFICPQQIETALASGVTTLMGGGTGPATGTNATTCTPGAFHIGRMLQAAEGLPVNLGFFGKGNASTPEALEEQVRAGACGLKLHEDWGTTPATIDACLSVADRMDVQVCIHTDTLNEAGFVEDTIAAIKGRTIHTFHTEGAGGGHAPDIIKICGEANVLPSSTNPTRPYTRNTLEEHLDMLMVCHHLDPKIPEDVAFAESRIRRETIAAEDILHDLGAFSIIASDSQAMGRVGEVITRTFQTAHKMKVQRGALPEDSARNDNHRLTRYIAKVTINPALAHGISSEVGSIETGKLADLVLWKPGFFGIRPELVVKGGSIVWAQMGDANASIPTPGPVHGRPMFGAFGKALAPSCLTFVSEAAMDNDIQSKLRLDRTCMAVKETRSVGKSALKLNAALPKVSVDPQTYEVFADGELLTCEPAEVLPLAQRYLLL</sequence>
<protein>
    <recommendedName>
        <fullName evidence="1">Urease subunit alpha</fullName>
        <ecNumber evidence="1">3.5.1.5</ecNumber>
    </recommendedName>
    <alternativeName>
        <fullName evidence="1">Urea amidohydrolase subunit alpha</fullName>
    </alternativeName>
</protein>
<name>URE1_PARMW</name>
<organism>
    <name type="scientific">Parasynechococcus marenigrum (strain WH8102)</name>
    <dbReference type="NCBI Taxonomy" id="84588"/>
    <lineage>
        <taxon>Bacteria</taxon>
        <taxon>Bacillati</taxon>
        <taxon>Cyanobacteriota</taxon>
        <taxon>Cyanophyceae</taxon>
        <taxon>Synechococcales</taxon>
        <taxon>Prochlorococcaceae</taxon>
        <taxon>Parasynechococcus</taxon>
        <taxon>Parasynechococcus marenigrum</taxon>
    </lineage>
</organism>
<evidence type="ECO:0000255" key="1">
    <source>
        <dbReference type="HAMAP-Rule" id="MF_01953"/>
    </source>
</evidence>
<gene>
    <name evidence="1" type="primary">ureC</name>
    <name type="ordered locus">SYNW2449</name>
</gene>
<proteinExistence type="inferred from homology"/>
<comment type="catalytic activity">
    <reaction evidence="1">
        <text>urea + 2 H2O + H(+) = hydrogencarbonate + 2 NH4(+)</text>
        <dbReference type="Rhea" id="RHEA:20557"/>
        <dbReference type="ChEBI" id="CHEBI:15377"/>
        <dbReference type="ChEBI" id="CHEBI:15378"/>
        <dbReference type="ChEBI" id="CHEBI:16199"/>
        <dbReference type="ChEBI" id="CHEBI:17544"/>
        <dbReference type="ChEBI" id="CHEBI:28938"/>
        <dbReference type="EC" id="3.5.1.5"/>
    </reaction>
</comment>
<comment type="cofactor">
    <cofactor evidence="1">
        <name>Ni cation</name>
        <dbReference type="ChEBI" id="CHEBI:25516"/>
    </cofactor>
    <text evidence="1">Binds 2 nickel ions per subunit.</text>
</comment>
<comment type="pathway">
    <text evidence="1">Nitrogen metabolism; urea degradation; CO(2) and NH(3) from urea (urease route): step 1/1.</text>
</comment>
<comment type="subunit">
    <text evidence="1">Heterotrimer of UreA (gamma), UreB (beta) and UreC (alpha) subunits. Three heterotrimers associate to form the active enzyme.</text>
</comment>
<comment type="subcellular location">
    <subcellularLocation>
        <location evidence="1">Cytoplasm</location>
    </subcellularLocation>
</comment>
<comment type="PTM">
    <text evidence="1">Carboxylation allows a single lysine to coordinate two nickel ions.</text>
</comment>
<comment type="similarity">
    <text evidence="1">Belongs to the metallo-dependent hydrolases superfamily. Urease alpha subunit family.</text>
</comment>
<accession>Q7U3I3</accession>
<dbReference type="EC" id="3.5.1.5" evidence="1"/>
<dbReference type="EMBL" id="BX569695">
    <property type="protein sequence ID" value="CAE08964.1"/>
    <property type="molecule type" value="Genomic_DNA"/>
</dbReference>
<dbReference type="RefSeq" id="WP_011129302.1">
    <property type="nucleotide sequence ID" value="NC_005070.1"/>
</dbReference>
<dbReference type="SMR" id="Q7U3I3"/>
<dbReference type="STRING" id="84588.SYNW2449"/>
<dbReference type="MEROPS" id="M38.982"/>
<dbReference type="KEGG" id="syw:SYNW2449"/>
<dbReference type="eggNOG" id="COG0804">
    <property type="taxonomic scope" value="Bacteria"/>
</dbReference>
<dbReference type="HOGENOM" id="CLU_000980_0_0_3"/>
<dbReference type="UniPathway" id="UPA00258">
    <property type="reaction ID" value="UER00370"/>
</dbReference>
<dbReference type="Proteomes" id="UP000001422">
    <property type="component" value="Chromosome"/>
</dbReference>
<dbReference type="GO" id="GO:0005737">
    <property type="term" value="C:cytoplasm"/>
    <property type="evidence" value="ECO:0007669"/>
    <property type="project" value="UniProtKB-SubCell"/>
</dbReference>
<dbReference type="GO" id="GO:0016151">
    <property type="term" value="F:nickel cation binding"/>
    <property type="evidence" value="ECO:0007669"/>
    <property type="project" value="UniProtKB-UniRule"/>
</dbReference>
<dbReference type="GO" id="GO:0009039">
    <property type="term" value="F:urease activity"/>
    <property type="evidence" value="ECO:0007669"/>
    <property type="project" value="UniProtKB-UniRule"/>
</dbReference>
<dbReference type="GO" id="GO:0043419">
    <property type="term" value="P:urea catabolic process"/>
    <property type="evidence" value="ECO:0007669"/>
    <property type="project" value="UniProtKB-UniRule"/>
</dbReference>
<dbReference type="CDD" id="cd00375">
    <property type="entry name" value="Urease_alpha"/>
    <property type="match status" value="1"/>
</dbReference>
<dbReference type="Gene3D" id="3.20.20.140">
    <property type="entry name" value="Metal-dependent hydrolases"/>
    <property type="match status" value="1"/>
</dbReference>
<dbReference type="Gene3D" id="2.30.40.10">
    <property type="entry name" value="Urease, subunit C, domain 1"/>
    <property type="match status" value="1"/>
</dbReference>
<dbReference type="HAMAP" id="MF_01953">
    <property type="entry name" value="Urease_alpha"/>
    <property type="match status" value="1"/>
</dbReference>
<dbReference type="InterPro" id="IPR006680">
    <property type="entry name" value="Amidohydro-rel"/>
</dbReference>
<dbReference type="InterPro" id="IPR011059">
    <property type="entry name" value="Metal-dep_hydrolase_composite"/>
</dbReference>
<dbReference type="InterPro" id="IPR032466">
    <property type="entry name" value="Metal_Hydrolase"/>
</dbReference>
<dbReference type="InterPro" id="IPR011612">
    <property type="entry name" value="Urease_alpha_N_dom"/>
</dbReference>
<dbReference type="InterPro" id="IPR050112">
    <property type="entry name" value="Urease_alpha_subunit"/>
</dbReference>
<dbReference type="InterPro" id="IPR017950">
    <property type="entry name" value="Urease_AS"/>
</dbReference>
<dbReference type="InterPro" id="IPR005848">
    <property type="entry name" value="Urease_asu"/>
</dbReference>
<dbReference type="InterPro" id="IPR017951">
    <property type="entry name" value="Urease_asu_c"/>
</dbReference>
<dbReference type="InterPro" id="IPR029754">
    <property type="entry name" value="Urease_Ni-bd"/>
</dbReference>
<dbReference type="NCBIfam" id="NF009685">
    <property type="entry name" value="PRK13206.1"/>
    <property type="match status" value="1"/>
</dbReference>
<dbReference type="NCBIfam" id="NF009686">
    <property type="entry name" value="PRK13207.1"/>
    <property type="match status" value="1"/>
</dbReference>
<dbReference type="NCBIfam" id="TIGR01792">
    <property type="entry name" value="urease_alph"/>
    <property type="match status" value="1"/>
</dbReference>
<dbReference type="PANTHER" id="PTHR43440">
    <property type="entry name" value="UREASE"/>
    <property type="match status" value="1"/>
</dbReference>
<dbReference type="PANTHER" id="PTHR43440:SF1">
    <property type="entry name" value="UREASE"/>
    <property type="match status" value="1"/>
</dbReference>
<dbReference type="Pfam" id="PF01979">
    <property type="entry name" value="Amidohydro_1"/>
    <property type="match status" value="1"/>
</dbReference>
<dbReference type="Pfam" id="PF00449">
    <property type="entry name" value="Urease_alpha"/>
    <property type="match status" value="1"/>
</dbReference>
<dbReference type="PRINTS" id="PR01752">
    <property type="entry name" value="UREASE"/>
</dbReference>
<dbReference type="SUPFAM" id="SSF51338">
    <property type="entry name" value="Composite domain of metallo-dependent hydrolases"/>
    <property type="match status" value="2"/>
</dbReference>
<dbReference type="SUPFAM" id="SSF51556">
    <property type="entry name" value="Metallo-dependent hydrolases"/>
    <property type="match status" value="1"/>
</dbReference>
<dbReference type="PROSITE" id="PS01120">
    <property type="entry name" value="UREASE_1"/>
    <property type="match status" value="1"/>
</dbReference>
<dbReference type="PROSITE" id="PS00145">
    <property type="entry name" value="UREASE_2"/>
    <property type="match status" value="1"/>
</dbReference>
<dbReference type="PROSITE" id="PS51368">
    <property type="entry name" value="UREASE_3"/>
    <property type="match status" value="1"/>
</dbReference>
<feature type="chain" id="PRO_0000234191" description="Urease subunit alpha">
    <location>
        <begin position="1"/>
        <end position="569"/>
    </location>
</feature>
<feature type="domain" description="Urease" evidence="1">
    <location>
        <begin position="131"/>
        <end position="569"/>
    </location>
</feature>
<feature type="active site" description="Proton donor" evidence="1">
    <location>
        <position position="322"/>
    </location>
</feature>
<feature type="binding site" evidence="1">
    <location>
        <position position="136"/>
    </location>
    <ligand>
        <name>Ni(2+)</name>
        <dbReference type="ChEBI" id="CHEBI:49786"/>
        <label>1</label>
    </ligand>
</feature>
<feature type="binding site" evidence="1">
    <location>
        <position position="138"/>
    </location>
    <ligand>
        <name>Ni(2+)</name>
        <dbReference type="ChEBI" id="CHEBI:49786"/>
        <label>1</label>
    </ligand>
</feature>
<feature type="binding site" description="via carbamate group" evidence="1">
    <location>
        <position position="219"/>
    </location>
    <ligand>
        <name>Ni(2+)</name>
        <dbReference type="ChEBI" id="CHEBI:49786"/>
        <label>1</label>
    </ligand>
</feature>
<feature type="binding site" description="via carbamate group" evidence="1">
    <location>
        <position position="219"/>
    </location>
    <ligand>
        <name>Ni(2+)</name>
        <dbReference type="ChEBI" id="CHEBI:49786"/>
        <label>2</label>
    </ligand>
</feature>
<feature type="binding site" evidence="1">
    <location>
        <position position="221"/>
    </location>
    <ligand>
        <name>substrate</name>
    </ligand>
</feature>
<feature type="binding site" evidence="1">
    <location>
        <position position="248"/>
    </location>
    <ligand>
        <name>Ni(2+)</name>
        <dbReference type="ChEBI" id="CHEBI:49786"/>
        <label>2</label>
    </ligand>
</feature>
<feature type="binding site" evidence="1">
    <location>
        <position position="274"/>
    </location>
    <ligand>
        <name>Ni(2+)</name>
        <dbReference type="ChEBI" id="CHEBI:49786"/>
        <label>2</label>
    </ligand>
</feature>
<feature type="binding site" evidence="1">
    <location>
        <position position="362"/>
    </location>
    <ligand>
        <name>Ni(2+)</name>
        <dbReference type="ChEBI" id="CHEBI:49786"/>
        <label>1</label>
    </ligand>
</feature>
<feature type="modified residue" description="N6-carboxylysine" evidence="1">
    <location>
        <position position="219"/>
    </location>
</feature>
<keyword id="KW-0963">Cytoplasm</keyword>
<keyword id="KW-0378">Hydrolase</keyword>
<keyword id="KW-0479">Metal-binding</keyword>
<keyword id="KW-0533">Nickel</keyword>